<keyword id="KW-0378">Hydrolase</keyword>
<keyword id="KW-0663">Pyridoxal phosphate</keyword>
<keyword id="KW-1185">Reference proteome</keyword>
<accession>Q13ME5</accession>
<evidence type="ECO:0000255" key="1">
    <source>
        <dbReference type="HAMAP-Rule" id="MF_00807"/>
    </source>
</evidence>
<proteinExistence type="inferred from homology"/>
<comment type="function">
    <text evidence="1">Catalyzes a cyclopropane ring-opening reaction, the irreversible conversion of 1-aminocyclopropane-1-carboxylate (ACC) to ammonia and alpha-ketobutyrate. Allows growth on ACC as a nitrogen source.</text>
</comment>
<comment type="catalytic activity">
    <reaction evidence="1">
        <text>1-aminocyclopropane-1-carboxylate + H2O = 2-oxobutanoate + NH4(+)</text>
        <dbReference type="Rhea" id="RHEA:16933"/>
        <dbReference type="ChEBI" id="CHEBI:15377"/>
        <dbReference type="ChEBI" id="CHEBI:16763"/>
        <dbReference type="ChEBI" id="CHEBI:28938"/>
        <dbReference type="ChEBI" id="CHEBI:58360"/>
        <dbReference type="EC" id="3.5.99.7"/>
    </reaction>
</comment>
<comment type="cofactor">
    <cofactor evidence="1">
        <name>pyridoxal 5'-phosphate</name>
        <dbReference type="ChEBI" id="CHEBI:597326"/>
    </cofactor>
</comment>
<comment type="subunit">
    <text evidence="1">Homotrimer.</text>
</comment>
<comment type="similarity">
    <text evidence="1">Belongs to the ACC deaminase/D-cysteine desulfhydrase family.</text>
</comment>
<reference key="1">
    <citation type="journal article" date="2006" name="Proc. Natl. Acad. Sci. U.S.A.">
        <title>Burkholderia xenovorans LB400 harbors a multi-replicon, 9.73-Mbp genome shaped for versatility.</title>
        <authorList>
            <person name="Chain P.S.G."/>
            <person name="Denef V.J."/>
            <person name="Konstantinidis K.T."/>
            <person name="Vergez L.M."/>
            <person name="Agullo L."/>
            <person name="Reyes V.L."/>
            <person name="Hauser L."/>
            <person name="Cordova M."/>
            <person name="Gomez L."/>
            <person name="Gonzalez M."/>
            <person name="Land M."/>
            <person name="Lao V."/>
            <person name="Larimer F."/>
            <person name="LiPuma J.J."/>
            <person name="Mahenthiralingam E."/>
            <person name="Malfatti S.A."/>
            <person name="Marx C.J."/>
            <person name="Parnell J.J."/>
            <person name="Ramette A."/>
            <person name="Richardson P."/>
            <person name="Seeger M."/>
            <person name="Smith D."/>
            <person name="Spilker T."/>
            <person name="Sul W.J."/>
            <person name="Tsoi T.V."/>
            <person name="Ulrich L.E."/>
            <person name="Zhulin I.B."/>
            <person name="Tiedje J.M."/>
        </authorList>
    </citation>
    <scope>NUCLEOTIDE SEQUENCE [LARGE SCALE GENOMIC DNA]</scope>
    <source>
        <strain>LB400</strain>
    </source>
</reference>
<dbReference type="EC" id="3.5.99.7" evidence="1"/>
<dbReference type="EMBL" id="CP000271">
    <property type="protein sequence ID" value="ABE34744.1"/>
    <property type="molecule type" value="Genomic_DNA"/>
</dbReference>
<dbReference type="RefSeq" id="WP_011492063.1">
    <property type="nucleotide sequence ID" value="NC_007952.1"/>
</dbReference>
<dbReference type="SMR" id="Q13ME5"/>
<dbReference type="STRING" id="266265.Bxe_B1212"/>
<dbReference type="KEGG" id="bxb:DR64_6528"/>
<dbReference type="KEGG" id="bxe:Bxe_B1212"/>
<dbReference type="PATRIC" id="fig|266265.5.peg.6544"/>
<dbReference type="eggNOG" id="COG2515">
    <property type="taxonomic scope" value="Bacteria"/>
</dbReference>
<dbReference type="OrthoDB" id="9801249at2"/>
<dbReference type="Proteomes" id="UP000001817">
    <property type="component" value="Chromosome 2"/>
</dbReference>
<dbReference type="GO" id="GO:0008660">
    <property type="term" value="F:1-aminocyclopropane-1-carboxylate deaminase activity"/>
    <property type="evidence" value="ECO:0007669"/>
    <property type="project" value="UniProtKB-UniRule"/>
</dbReference>
<dbReference type="GO" id="GO:0019148">
    <property type="term" value="F:D-cysteine desulfhydrase activity"/>
    <property type="evidence" value="ECO:0007669"/>
    <property type="project" value="TreeGrafter"/>
</dbReference>
<dbReference type="GO" id="GO:0030170">
    <property type="term" value="F:pyridoxal phosphate binding"/>
    <property type="evidence" value="ECO:0007669"/>
    <property type="project" value="InterPro"/>
</dbReference>
<dbReference type="GO" id="GO:0018871">
    <property type="term" value="P:1-aminocyclopropane-1-carboxylate metabolic process"/>
    <property type="evidence" value="ECO:0007669"/>
    <property type="project" value="UniProtKB-UniRule"/>
</dbReference>
<dbReference type="GO" id="GO:0009310">
    <property type="term" value="P:amine catabolic process"/>
    <property type="evidence" value="ECO:0007669"/>
    <property type="project" value="InterPro"/>
</dbReference>
<dbReference type="CDD" id="cd06449">
    <property type="entry name" value="ACCD"/>
    <property type="match status" value="1"/>
</dbReference>
<dbReference type="FunFam" id="3.40.50.1100:FF:000053">
    <property type="entry name" value="1-aminocyclopropane-1-carboxylate deaminase"/>
    <property type="match status" value="1"/>
</dbReference>
<dbReference type="Gene3D" id="3.40.50.1100">
    <property type="match status" value="2"/>
</dbReference>
<dbReference type="HAMAP" id="MF_00807">
    <property type="entry name" value="ACC_deaminase"/>
    <property type="match status" value="1"/>
</dbReference>
<dbReference type="InterPro" id="IPR027278">
    <property type="entry name" value="ACCD_DCysDesulf"/>
</dbReference>
<dbReference type="InterPro" id="IPR005965">
    <property type="entry name" value="ACP_carboxylate_deaminase"/>
</dbReference>
<dbReference type="InterPro" id="IPR020601">
    <property type="entry name" value="ACP_carboxylate_deaminase_bac"/>
</dbReference>
<dbReference type="InterPro" id="IPR001926">
    <property type="entry name" value="TrpB-like_PALP"/>
</dbReference>
<dbReference type="InterPro" id="IPR036052">
    <property type="entry name" value="TrpB-like_PALP_sf"/>
</dbReference>
<dbReference type="NCBIfam" id="TIGR01274">
    <property type="entry name" value="ACC_deam"/>
    <property type="match status" value="1"/>
</dbReference>
<dbReference type="PANTHER" id="PTHR43780">
    <property type="entry name" value="1-AMINOCYCLOPROPANE-1-CARBOXYLATE DEAMINASE-RELATED"/>
    <property type="match status" value="1"/>
</dbReference>
<dbReference type="PANTHER" id="PTHR43780:SF2">
    <property type="entry name" value="1-AMINOCYCLOPROPANE-1-CARBOXYLATE DEAMINASE-RELATED"/>
    <property type="match status" value="1"/>
</dbReference>
<dbReference type="Pfam" id="PF00291">
    <property type="entry name" value="PALP"/>
    <property type="match status" value="1"/>
</dbReference>
<dbReference type="PIRSF" id="PIRSF006278">
    <property type="entry name" value="ACCD_DCysDesulf"/>
    <property type="match status" value="1"/>
</dbReference>
<dbReference type="SUPFAM" id="SSF53686">
    <property type="entry name" value="Tryptophan synthase beta subunit-like PLP-dependent enzymes"/>
    <property type="match status" value="1"/>
</dbReference>
<sequence length="338" mass="36627">MNLQRFPRYPLTFGPTPIQPLARLSKHLGGKVHLYAKREDCNSGLAFGGNKTRKLEYLIPEVLAQGCDTLVSIGGIQSNQTRQVAAVAAHLGMKCVLVQENWVNYSDAVYDRVGNIQMSRILGADVRLVPDGFDIGFRKSWEEALESVRAAGGKPYAIPAGCSDHPLGGLGFVGFAEEVRQQEAELGFKFDYVVVCSVTGSTQAGMVVGFAADGRADRVIGIDASAKPAQTREQITRIARQTAEKVGLGRDITSEDVVLDERFAGPEYGLPNDGTLEAIRLCARMEGVLTDPVYEGKSMHGMIEMVRNGEFPEGSRVLYAHLGGVPALNGYSFIFRNG</sequence>
<name>1A1D_PARXL</name>
<protein>
    <recommendedName>
        <fullName evidence="1">1-aminocyclopropane-1-carboxylate deaminase</fullName>
        <shortName evidence="1">ACC deaminase</shortName>
        <shortName evidence="1">ACCD</shortName>
        <ecNumber evidence="1">3.5.99.7</ecNumber>
    </recommendedName>
</protein>
<gene>
    <name evidence="1" type="primary">acdS</name>
    <name type="ordered locus">Bxeno_B1776</name>
    <name type="ORF">Bxe_B1212</name>
</gene>
<feature type="chain" id="PRO_0000304377" description="1-aminocyclopropane-1-carboxylate deaminase">
    <location>
        <begin position="1"/>
        <end position="338"/>
    </location>
</feature>
<feature type="active site" description="Nucleophile" evidence="1">
    <location>
        <position position="78"/>
    </location>
</feature>
<feature type="modified residue" description="N6-(pyridoxal phosphate)lysine" evidence="1">
    <location>
        <position position="51"/>
    </location>
</feature>
<organism>
    <name type="scientific">Paraburkholderia xenovorans (strain LB400)</name>
    <dbReference type="NCBI Taxonomy" id="266265"/>
    <lineage>
        <taxon>Bacteria</taxon>
        <taxon>Pseudomonadati</taxon>
        <taxon>Pseudomonadota</taxon>
        <taxon>Betaproteobacteria</taxon>
        <taxon>Burkholderiales</taxon>
        <taxon>Burkholderiaceae</taxon>
        <taxon>Paraburkholderia</taxon>
    </lineage>
</organism>